<accession>Q5F4X5</accession>
<gene>
    <name evidence="1" type="primary">fabH</name>
    <name type="ordered locus">NGO_2168</name>
</gene>
<keyword id="KW-0012">Acyltransferase</keyword>
<keyword id="KW-0963">Cytoplasm</keyword>
<keyword id="KW-0275">Fatty acid biosynthesis</keyword>
<keyword id="KW-0276">Fatty acid metabolism</keyword>
<keyword id="KW-0444">Lipid biosynthesis</keyword>
<keyword id="KW-0443">Lipid metabolism</keyword>
<keyword id="KW-0511">Multifunctional enzyme</keyword>
<keyword id="KW-1185">Reference proteome</keyword>
<keyword id="KW-0808">Transferase</keyword>
<dbReference type="EC" id="2.3.1.180" evidence="1"/>
<dbReference type="EMBL" id="AE004969">
    <property type="protein sequence ID" value="AAW90762.1"/>
    <property type="molecule type" value="Genomic_DNA"/>
</dbReference>
<dbReference type="RefSeq" id="WP_003687179.1">
    <property type="nucleotide sequence ID" value="NC_002946.2"/>
</dbReference>
<dbReference type="RefSeq" id="YP_209174.1">
    <property type="nucleotide sequence ID" value="NC_002946.2"/>
</dbReference>
<dbReference type="SMR" id="Q5F4X5"/>
<dbReference type="STRING" id="242231.NGO_2168"/>
<dbReference type="KEGG" id="ngo:NGO_2168"/>
<dbReference type="PATRIC" id="fig|242231.10.peg.2618"/>
<dbReference type="HOGENOM" id="CLU_039592_4_1_4"/>
<dbReference type="UniPathway" id="UPA00094"/>
<dbReference type="Proteomes" id="UP000000535">
    <property type="component" value="Chromosome"/>
</dbReference>
<dbReference type="GO" id="GO:0005737">
    <property type="term" value="C:cytoplasm"/>
    <property type="evidence" value="ECO:0007669"/>
    <property type="project" value="UniProtKB-SubCell"/>
</dbReference>
<dbReference type="GO" id="GO:0004315">
    <property type="term" value="F:3-oxoacyl-[acyl-carrier-protein] synthase activity"/>
    <property type="evidence" value="ECO:0007669"/>
    <property type="project" value="InterPro"/>
</dbReference>
<dbReference type="GO" id="GO:0033818">
    <property type="term" value="F:beta-ketoacyl-acyl-carrier-protein synthase III activity"/>
    <property type="evidence" value="ECO:0007669"/>
    <property type="project" value="UniProtKB-UniRule"/>
</dbReference>
<dbReference type="GO" id="GO:0006633">
    <property type="term" value="P:fatty acid biosynthetic process"/>
    <property type="evidence" value="ECO:0007669"/>
    <property type="project" value="UniProtKB-UniRule"/>
</dbReference>
<dbReference type="CDD" id="cd00830">
    <property type="entry name" value="KAS_III"/>
    <property type="match status" value="1"/>
</dbReference>
<dbReference type="FunFam" id="3.40.47.10:FF:000004">
    <property type="entry name" value="3-oxoacyl-[acyl-carrier-protein] synthase 3"/>
    <property type="match status" value="1"/>
</dbReference>
<dbReference type="Gene3D" id="3.40.47.10">
    <property type="match status" value="1"/>
</dbReference>
<dbReference type="HAMAP" id="MF_01815">
    <property type="entry name" value="FabH"/>
    <property type="match status" value="1"/>
</dbReference>
<dbReference type="InterPro" id="IPR013747">
    <property type="entry name" value="ACP_syn_III_C"/>
</dbReference>
<dbReference type="InterPro" id="IPR013751">
    <property type="entry name" value="ACP_syn_III_N"/>
</dbReference>
<dbReference type="InterPro" id="IPR004655">
    <property type="entry name" value="FabH"/>
</dbReference>
<dbReference type="InterPro" id="IPR016039">
    <property type="entry name" value="Thiolase-like"/>
</dbReference>
<dbReference type="NCBIfam" id="TIGR00747">
    <property type="entry name" value="fabH"/>
    <property type="match status" value="1"/>
</dbReference>
<dbReference type="NCBIfam" id="NF006829">
    <property type="entry name" value="PRK09352.1"/>
    <property type="match status" value="1"/>
</dbReference>
<dbReference type="PANTHER" id="PTHR43091">
    <property type="entry name" value="3-OXOACYL-[ACYL-CARRIER-PROTEIN] SYNTHASE"/>
    <property type="match status" value="1"/>
</dbReference>
<dbReference type="PANTHER" id="PTHR43091:SF1">
    <property type="entry name" value="BETA-KETOACYL-[ACYL-CARRIER-PROTEIN] SYNTHASE III, CHLOROPLASTIC"/>
    <property type="match status" value="1"/>
</dbReference>
<dbReference type="Pfam" id="PF08545">
    <property type="entry name" value="ACP_syn_III"/>
    <property type="match status" value="1"/>
</dbReference>
<dbReference type="Pfam" id="PF08541">
    <property type="entry name" value="ACP_syn_III_C"/>
    <property type="match status" value="1"/>
</dbReference>
<dbReference type="SUPFAM" id="SSF53901">
    <property type="entry name" value="Thiolase-like"/>
    <property type="match status" value="1"/>
</dbReference>
<evidence type="ECO:0000255" key="1">
    <source>
        <dbReference type="HAMAP-Rule" id="MF_01815"/>
    </source>
</evidence>
<sequence length="320" mass="34002">MQYAKISGTGSYLPANRVSNDDLAQKVDTSDEWITARTGIKFRHIAAENEKTSDLAAEAARRALADAKLNINDIDLIIVATATPDMQFPSTATIVQQKLGITNGCPAFDVQAVCAGFMYALTTANAYIKSGMAKNALVIGAETFSRIVDWNDRTTCVLFGDGAGAVVLSASDKPGIIHSKLKADGNYLKLLNVPGQIACGKVSGSPYISMDGPGVFKFAVKMLSKIADDVIEEAGYTAEQIDWIVPHQANRRIIESTAKHLGLSMDKVVLTVQDHGNTSAASIPLALDAGIRSGQIKRGQNLLLEGIGGGFAWGAVLLQY</sequence>
<feature type="chain" id="PRO_1000056381" description="Beta-ketoacyl-[acyl-carrier-protein] synthase III">
    <location>
        <begin position="1"/>
        <end position="320"/>
    </location>
</feature>
<feature type="region of interest" description="ACP-binding" evidence="1">
    <location>
        <begin position="248"/>
        <end position="252"/>
    </location>
</feature>
<feature type="active site" evidence="1">
    <location>
        <position position="114"/>
    </location>
</feature>
<feature type="active site" evidence="1">
    <location>
        <position position="247"/>
    </location>
</feature>
<feature type="active site" evidence="1">
    <location>
        <position position="277"/>
    </location>
</feature>
<comment type="function">
    <text evidence="1">Catalyzes the condensation reaction of fatty acid synthesis by the addition to an acyl acceptor of two carbons from malonyl-ACP. Catalyzes the first condensation reaction which initiates fatty acid synthesis and may therefore play a role in governing the total rate of fatty acid production. Possesses both acetoacetyl-ACP synthase and acetyl transacylase activities. Its substrate specificity determines the biosynthesis of branched-chain and/or straight-chain of fatty acids.</text>
</comment>
<comment type="catalytic activity">
    <reaction evidence="1">
        <text>malonyl-[ACP] + acetyl-CoA + H(+) = 3-oxobutanoyl-[ACP] + CO2 + CoA</text>
        <dbReference type="Rhea" id="RHEA:12080"/>
        <dbReference type="Rhea" id="RHEA-COMP:9623"/>
        <dbReference type="Rhea" id="RHEA-COMP:9625"/>
        <dbReference type="ChEBI" id="CHEBI:15378"/>
        <dbReference type="ChEBI" id="CHEBI:16526"/>
        <dbReference type="ChEBI" id="CHEBI:57287"/>
        <dbReference type="ChEBI" id="CHEBI:57288"/>
        <dbReference type="ChEBI" id="CHEBI:78449"/>
        <dbReference type="ChEBI" id="CHEBI:78450"/>
        <dbReference type="EC" id="2.3.1.180"/>
    </reaction>
</comment>
<comment type="pathway">
    <text evidence="1">Lipid metabolism; fatty acid biosynthesis.</text>
</comment>
<comment type="subunit">
    <text evidence="1">Homodimer.</text>
</comment>
<comment type="subcellular location">
    <subcellularLocation>
        <location evidence="1">Cytoplasm</location>
    </subcellularLocation>
</comment>
<comment type="domain">
    <text evidence="1">The last Arg residue of the ACP-binding site is essential for the weak association between ACP/AcpP and FabH.</text>
</comment>
<comment type="similarity">
    <text evidence="1">Belongs to the thiolase-like superfamily. FabH family.</text>
</comment>
<reference key="1">
    <citation type="submission" date="2003-03" db="EMBL/GenBank/DDBJ databases">
        <title>The complete genome sequence of Neisseria gonorrhoeae.</title>
        <authorList>
            <person name="Lewis L.A."/>
            <person name="Gillaspy A.F."/>
            <person name="McLaughlin R.E."/>
            <person name="Gipson M."/>
            <person name="Ducey T.F."/>
            <person name="Ownbey T."/>
            <person name="Hartman K."/>
            <person name="Nydick C."/>
            <person name="Carson M.B."/>
            <person name="Vaughn J."/>
            <person name="Thomson C."/>
            <person name="Song L."/>
            <person name="Lin S."/>
            <person name="Yuan X."/>
            <person name="Najar F."/>
            <person name="Zhan M."/>
            <person name="Ren Q."/>
            <person name="Zhu H."/>
            <person name="Qi S."/>
            <person name="Kenton S.M."/>
            <person name="Lai H."/>
            <person name="White J.D."/>
            <person name="Clifton S."/>
            <person name="Roe B.A."/>
            <person name="Dyer D.W."/>
        </authorList>
    </citation>
    <scope>NUCLEOTIDE SEQUENCE [LARGE SCALE GENOMIC DNA]</scope>
    <source>
        <strain>ATCC 700825 / FA 1090</strain>
    </source>
</reference>
<proteinExistence type="inferred from homology"/>
<organism>
    <name type="scientific">Neisseria gonorrhoeae (strain ATCC 700825 / FA 1090)</name>
    <dbReference type="NCBI Taxonomy" id="242231"/>
    <lineage>
        <taxon>Bacteria</taxon>
        <taxon>Pseudomonadati</taxon>
        <taxon>Pseudomonadota</taxon>
        <taxon>Betaproteobacteria</taxon>
        <taxon>Neisseriales</taxon>
        <taxon>Neisseriaceae</taxon>
        <taxon>Neisseria</taxon>
    </lineage>
</organism>
<name>FABH_NEIG1</name>
<protein>
    <recommendedName>
        <fullName evidence="1">Beta-ketoacyl-[acyl-carrier-protein] synthase III</fullName>
        <shortName evidence="1">Beta-ketoacyl-ACP synthase III</shortName>
        <shortName evidence="1">KAS III</shortName>
        <ecNumber evidence="1">2.3.1.180</ecNumber>
    </recommendedName>
    <alternativeName>
        <fullName evidence="1">3-oxoacyl-[acyl-carrier-protein] synthase 3</fullName>
    </alternativeName>
    <alternativeName>
        <fullName evidence="1">3-oxoacyl-[acyl-carrier-protein] synthase III</fullName>
    </alternativeName>
</protein>